<feature type="chain" id="PRO_0000195830" description="Glutamine--tRNA ligase">
    <location>
        <begin position="1"/>
        <end position="560"/>
    </location>
</feature>
<feature type="short sequence motif" description="'HIGH' region" evidence="1">
    <location>
        <begin position="36"/>
        <end position="46"/>
    </location>
</feature>
<feature type="short sequence motif" description="'KMSKS' region" evidence="1">
    <location>
        <begin position="270"/>
        <end position="274"/>
    </location>
</feature>
<feature type="binding site" evidence="1">
    <location>
        <begin position="37"/>
        <end position="39"/>
    </location>
    <ligand>
        <name>ATP</name>
        <dbReference type="ChEBI" id="CHEBI:30616"/>
    </ligand>
</feature>
<feature type="binding site" evidence="1">
    <location>
        <begin position="43"/>
        <end position="49"/>
    </location>
    <ligand>
        <name>ATP</name>
        <dbReference type="ChEBI" id="CHEBI:30616"/>
    </ligand>
</feature>
<feature type="binding site" evidence="1">
    <location>
        <position position="69"/>
    </location>
    <ligand>
        <name>L-glutamine</name>
        <dbReference type="ChEBI" id="CHEBI:58359"/>
    </ligand>
</feature>
<feature type="binding site" evidence="1">
    <location>
        <position position="214"/>
    </location>
    <ligand>
        <name>L-glutamine</name>
        <dbReference type="ChEBI" id="CHEBI:58359"/>
    </ligand>
</feature>
<feature type="binding site" evidence="1">
    <location>
        <begin position="263"/>
        <end position="264"/>
    </location>
    <ligand>
        <name>ATP</name>
        <dbReference type="ChEBI" id="CHEBI:30616"/>
    </ligand>
</feature>
<keyword id="KW-0030">Aminoacyl-tRNA synthetase</keyword>
<keyword id="KW-0067">ATP-binding</keyword>
<keyword id="KW-0963">Cytoplasm</keyword>
<keyword id="KW-0436">Ligase</keyword>
<keyword id="KW-0547">Nucleotide-binding</keyword>
<keyword id="KW-0648">Protein biosynthesis</keyword>
<keyword id="KW-1185">Reference proteome</keyword>
<organism>
    <name type="scientific">Chromobacterium violaceum (strain ATCC 12472 / DSM 30191 / JCM 1249 / CCUG 213 / NBRC 12614 / NCIMB 9131 / NCTC 9757 / MK)</name>
    <dbReference type="NCBI Taxonomy" id="243365"/>
    <lineage>
        <taxon>Bacteria</taxon>
        <taxon>Pseudomonadati</taxon>
        <taxon>Pseudomonadota</taxon>
        <taxon>Betaproteobacteria</taxon>
        <taxon>Neisseriales</taxon>
        <taxon>Chromobacteriaceae</taxon>
        <taxon>Chromobacterium</taxon>
    </lineage>
</organism>
<proteinExistence type="inferred from homology"/>
<dbReference type="EC" id="6.1.1.18" evidence="1"/>
<dbReference type="EMBL" id="AE016825">
    <property type="protein sequence ID" value="AAQ59416.2"/>
    <property type="molecule type" value="Genomic_DNA"/>
</dbReference>
<dbReference type="RefSeq" id="WP_011135294.1">
    <property type="nucleotide sequence ID" value="NC_005085.1"/>
</dbReference>
<dbReference type="SMR" id="Q7NX86"/>
<dbReference type="STRING" id="243365.CV_1742"/>
<dbReference type="KEGG" id="cvi:CV_1742"/>
<dbReference type="eggNOG" id="COG0008">
    <property type="taxonomic scope" value="Bacteria"/>
</dbReference>
<dbReference type="HOGENOM" id="CLU_001882_2_3_4"/>
<dbReference type="OrthoDB" id="9801560at2"/>
<dbReference type="Proteomes" id="UP000001424">
    <property type="component" value="Chromosome"/>
</dbReference>
<dbReference type="GO" id="GO:0005829">
    <property type="term" value="C:cytosol"/>
    <property type="evidence" value="ECO:0007669"/>
    <property type="project" value="TreeGrafter"/>
</dbReference>
<dbReference type="GO" id="GO:0005524">
    <property type="term" value="F:ATP binding"/>
    <property type="evidence" value="ECO:0007669"/>
    <property type="project" value="UniProtKB-UniRule"/>
</dbReference>
<dbReference type="GO" id="GO:0004819">
    <property type="term" value="F:glutamine-tRNA ligase activity"/>
    <property type="evidence" value="ECO:0007669"/>
    <property type="project" value="UniProtKB-UniRule"/>
</dbReference>
<dbReference type="GO" id="GO:0006425">
    <property type="term" value="P:glutaminyl-tRNA aminoacylation"/>
    <property type="evidence" value="ECO:0007669"/>
    <property type="project" value="InterPro"/>
</dbReference>
<dbReference type="GO" id="GO:0006424">
    <property type="term" value="P:glutamyl-tRNA aminoacylation"/>
    <property type="evidence" value="ECO:0007669"/>
    <property type="project" value="UniProtKB-UniRule"/>
</dbReference>
<dbReference type="FunFam" id="1.10.1160.10:FF:000001">
    <property type="entry name" value="Glutamine--tRNA ligase"/>
    <property type="match status" value="1"/>
</dbReference>
<dbReference type="FunFam" id="3.90.800.10:FF:000001">
    <property type="entry name" value="Glutamine--tRNA ligase"/>
    <property type="match status" value="1"/>
</dbReference>
<dbReference type="FunFam" id="3.40.50.620:FF:000037">
    <property type="entry name" value="Glutamine--tRNA ligase cytoplasmic"/>
    <property type="match status" value="1"/>
</dbReference>
<dbReference type="Gene3D" id="1.10.1160.10">
    <property type="entry name" value="Glutamyl-trna Synthetase, Domain 2"/>
    <property type="match status" value="1"/>
</dbReference>
<dbReference type="Gene3D" id="3.90.800.10">
    <property type="entry name" value="Glutamyl-tRNA Synthetase, Domain 3"/>
    <property type="match status" value="1"/>
</dbReference>
<dbReference type="Gene3D" id="3.40.50.620">
    <property type="entry name" value="HUPs"/>
    <property type="match status" value="1"/>
</dbReference>
<dbReference type="Gene3D" id="2.40.240.10">
    <property type="entry name" value="Ribosomal Protein L25, Chain P"/>
    <property type="match status" value="2"/>
</dbReference>
<dbReference type="HAMAP" id="MF_00126">
    <property type="entry name" value="Gln_tRNA_synth"/>
    <property type="match status" value="1"/>
</dbReference>
<dbReference type="InterPro" id="IPR004514">
    <property type="entry name" value="Gln-tRNA-synth"/>
</dbReference>
<dbReference type="InterPro" id="IPR050132">
    <property type="entry name" value="Gln/Glu-tRNA_Ligase"/>
</dbReference>
<dbReference type="InterPro" id="IPR022861">
    <property type="entry name" value="Gln_tRNA_ligase_bac"/>
</dbReference>
<dbReference type="InterPro" id="IPR000924">
    <property type="entry name" value="Glu/Gln-tRNA-synth"/>
</dbReference>
<dbReference type="InterPro" id="IPR020058">
    <property type="entry name" value="Glu/Gln-tRNA-synth_Ib_cat-dom"/>
</dbReference>
<dbReference type="InterPro" id="IPR020059">
    <property type="entry name" value="Glu/Gln-tRNA-synth_Ib_codon-bd"/>
</dbReference>
<dbReference type="InterPro" id="IPR020061">
    <property type="entry name" value="Glu_tRNA_lig_a-bdl"/>
</dbReference>
<dbReference type="InterPro" id="IPR020056">
    <property type="entry name" value="Rbsml_bL25/Gln-tRNA_synth_N"/>
</dbReference>
<dbReference type="InterPro" id="IPR011035">
    <property type="entry name" value="Ribosomal_bL25/Gln-tRNA_synth"/>
</dbReference>
<dbReference type="InterPro" id="IPR014729">
    <property type="entry name" value="Rossmann-like_a/b/a_fold"/>
</dbReference>
<dbReference type="InterPro" id="IPR049437">
    <property type="entry name" value="tRNA-synt_1c_C2"/>
</dbReference>
<dbReference type="NCBIfam" id="TIGR00440">
    <property type="entry name" value="glnS"/>
    <property type="match status" value="1"/>
</dbReference>
<dbReference type="NCBIfam" id="NF011291">
    <property type="entry name" value="PRK14703.1"/>
    <property type="match status" value="1"/>
</dbReference>
<dbReference type="PANTHER" id="PTHR43097:SF5">
    <property type="entry name" value="GLUTAMATE--TRNA LIGASE"/>
    <property type="match status" value="1"/>
</dbReference>
<dbReference type="PANTHER" id="PTHR43097">
    <property type="entry name" value="GLUTAMINE-TRNA LIGASE"/>
    <property type="match status" value="1"/>
</dbReference>
<dbReference type="Pfam" id="PF00749">
    <property type="entry name" value="tRNA-synt_1c"/>
    <property type="match status" value="1"/>
</dbReference>
<dbReference type="Pfam" id="PF03950">
    <property type="entry name" value="tRNA-synt_1c_C"/>
    <property type="match status" value="1"/>
</dbReference>
<dbReference type="Pfam" id="PF20974">
    <property type="entry name" value="tRNA-synt_1c_C2"/>
    <property type="match status" value="1"/>
</dbReference>
<dbReference type="PRINTS" id="PR00987">
    <property type="entry name" value="TRNASYNTHGLU"/>
</dbReference>
<dbReference type="SUPFAM" id="SSF52374">
    <property type="entry name" value="Nucleotidylyl transferase"/>
    <property type="match status" value="1"/>
</dbReference>
<dbReference type="SUPFAM" id="SSF50715">
    <property type="entry name" value="Ribosomal protein L25-like"/>
    <property type="match status" value="1"/>
</dbReference>
<name>SYQ_CHRVO</name>
<gene>
    <name evidence="1" type="primary">glnS</name>
    <name type="ordered locus">CV_1742</name>
</gene>
<sequence length="560" mass="64372">MSTENNAPVVNNFIRSIIDEDLATGRRSSVVTRFPPEPNGFAHIGHAKAICINFGLAEDYNGQCNLRMDDTNPEKESDEFVEAFKQDISWLGFKWNGEVRYASDYFDRLYDYAVELIQAGKAYVDDLSAEEMRQYRGNLTEPGKNSPYRDRTPEENLDLFTRMKNGEFPDGSKTLRLKIDMASGNINLRDPAIYRIRRVHHHRTGDKWCIYPMYDYTHCISDAIEGITHSLCSLEFEDHRPLYDWVLDNISIEHHPQQIEFSRLELLYALTSKRKLQALVNDGAVTGWDDPRMPTIAGMRRRGYSPAGIKLFAQRIGVSKSENIIDMAILEGAVRETLENDSPRVMAVVNPLKVTLTNYDAAVTASRSAPFHPHHPEFGERDVPIAREIWIERDDFAETPPPKWQRLTAGGEVRLRYSYVIKCDEVVKDAADEIVELKCSIDHDTLGKNPEGRKVKGVIHWVSAEHAIQADVRWYERLFTEQRPDAVRGEDGEYVDFRQFLNPESLKLVPAYVEASVLQAEPESRFQFERLGYFVTDRYEHRKGDKAVFNRTVGLKDSWK</sequence>
<reference key="1">
    <citation type="journal article" date="2003" name="Proc. Natl. Acad. Sci. U.S.A.">
        <title>The complete genome sequence of Chromobacterium violaceum reveals remarkable and exploitable bacterial adaptability.</title>
        <authorList>
            <person name="Vasconcelos A.T.R."/>
            <person name="de Almeida D.F."/>
            <person name="Hungria M."/>
            <person name="Guimaraes C.T."/>
            <person name="Antonio R.V."/>
            <person name="Almeida F.C."/>
            <person name="de Almeida L.G.P."/>
            <person name="de Almeida R."/>
            <person name="Alves-Gomes J.A."/>
            <person name="Andrade E.M."/>
            <person name="Araripe J."/>
            <person name="de Araujo M.F.F."/>
            <person name="Astolfi-Filho S."/>
            <person name="Azevedo V."/>
            <person name="Baptista A.J."/>
            <person name="Bataus L.A.M."/>
            <person name="Batista J.S."/>
            <person name="Belo A."/>
            <person name="van den Berg C."/>
            <person name="Bogo M."/>
            <person name="Bonatto S."/>
            <person name="Bordignon J."/>
            <person name="Brigido M.M."/>
            <person name="Brito C.A."/>
            <person name="Brocchi M."/>
            <person name="Burity H.A."/>
            <person name="Camargo A.A."/>
            <person name="Cardoso D.D.P."/>
            <person name="Carneiro N.P."/>
            <person name="Carraro D.M."/>
            <person name="Carvalho C.M.B."/>
            <person name="Cascardo J.C.M."/>
            <person name="Cavada B.S."/>
            <person name="Chueire L.M.O."/>
            <person name="Creczynski-Pasa T.B."/>
            <person name="Cunha-Junior N.C."/>
            <person name="Fagundes N."/>
            <person name="Falcao C.L."/>
            <person name="Fantinatti F."/>
            <person name="Farias I.P."/>
            <person name="Felipe M.S.S."/>
            <person name="Ferrari L.P."/>
            <person name="Ferro J.A."/>
            <person name="Ferro M.I.T."/>
            <person name="Franco G.R."/>
            <person name="Freitas N.S.A."/>
            <person name="Furlan L.R."/>
            <person name="Gazzinelli R.T."/>
            <person name="Gomes E.A."/>
            <person name="Goncalves P.R."/>
            <person name="Grangeiro T.B."/>
            <person name="Grattapaglia D."/>
            <person name="Grisard E.C."/>
            <person name="Hanna E.S."/>
            <person name="Jardim S.N."/>
            <person name="Laurino J."/>
            <person name="Leoi L.C.T."/>
            <person name="Lima L.F.A."/>
            <person name="Loureiro M.F."/>
            <person name="Lyra M.C.C.P."/>
            <person name="Madeira H.M.F."/>
            <person name="Manfio G.P."/>
            <person name="Maranhao A.Q."/>
            <person name="Martins W.S."/>
            <person name="di Mauro S.M.Z."/>
            <person name="de Medeiros S.R.B."/>
            <person name="Meissner R.V."/>
            <person name="Moreira M.A.M."/>
            <person name="Nascimento F.F."/>
            <person name="Nicolas M.F."/>
            <person name="Oliveira J.G."/>
            <person name="Oliveira S.C."/>
            <person name="Paixao R.F.C."/>
            <person name="Parente J.A."/>
            <person name="Pedrosa F.O."/>
            <person name="Pena S.D.J."/>
            <person name="Pereira J.O."/>
            <person name="Pereira M."/>
            <person name="Pinto L.S.R.C."/>
            <person name="Pinto L.S."/>
            <person name="Porto J.I.R."/>
            <person name="Potrich D.P."/>
            <person name="Ramalho-Neto C.E."/>
            <person name="Reis A.M.M."/>
            <person name="Rigo L.U."/>
            <person name="Rondinelli E."/>
            <person name="Santos E.B.P."/>
            <person name="Santos F.R."/>
            <person name="Schneider M.P.C."/>
            <person name="Seuanez H.N."/>
            <person name="Silva A.M.R."/>
            <person name="da Silva A.L.C."/>
            <person name="Silva D.W."/>
            <person name="Silva R."/>
            <person name="Simoes I.C."/>
            <person name="Simon D."/>
            <person name="Soares C.M.A."/>
            <person name="Soares R.B.A."/>
            <person name="Souza E.M."/>
            <person name="Souza K.R.L."/>
            <person name="Souza R.C."/>
            <person name="Steffens M.B.R."/>
            <person name="Steindel M."/>
            <person name="Teixeira S.R."/>
            <person name="Urmenyi T."/>
            <person name="Vettore A."/>
            <person name="Wassem R."/>
            <person name="Zaha A."/>
            <person name="Simpson A.J.G."/>
        </authorList>
    </citation>
    <scope>NUCLEOTIDE SEQUENCE [LARGE SCALE GENOMIC DNA]</scope>
    <source>
        <strain>ATCC 12472 / DSM 30191 / JCM 1249 / CCUG 213 / NBRC 12614 / NCIMB 9131 / NCTC 9757 / MK</strain>
    </source>
</reference>
<accession>Q7NX86</accession>
<comment type="catalytic activity">
    <reaction evidence="1">
        <text>tRNA(Gln) + L-glutamine + ATP = L-glutaminyl-tRNA(Gln) + AMP + diphosphate</text>
        <dbReference type="Rhea" id="RHEA:20121"/>
        <dbReference type="Rhea" id="RHEA-COMP:9662"/>
        <dbReference type="Rhea" id="RHEA-COMP:9681"/>
        <dbReference type="ChEBI" id="CHEBI:30616"/>
        <dbReference type="ChEBI" id="CHEBI:33019"/>
        <dbReference type="ChEBI" id="CHEBI:58359"/>
        <dbReference type="ChEBI" id="CHEBI:78442"/>
        <dbReference type="ChEBI" id="CHEBI:78521"/>
        <dbReference type="ChEBI" id="CHEBI:456215"/>
        <dbReference type="EC" id="6.1.1.18"/>
    </reaction>
</comment>
<comment type="subunit">
    <text evidence="1">Monomer.</text>
</comment>
<comment type="subcellular location">
    <subcellularLocation>
        <location evidence="1">Cytoplasm</location>
    </subcellularLocation>
</comment>
<comment type="similarity">
    <text evidence="1">Belongs to the class-I aminoacyl-tRNA synthetase family.</text>
</comment>
<protein>
    <recommendedName>
        <fullName evidence="1">Glutamine--tRNA ligase</fullName>
        <ecNumber evidence="1">6.1.1.18</ecNumber>
    </recommendedName>
    <alternativeName>
        <fullName evidence="1">Glutaminyl-tRNA synthetase</fullName>
        <shortName evidence="1">GlnRS</shortName>
    </alternativeName>
</protein>
<evidence type="ECO:0000255" key="1">
    <source>
        <dbReference type="HAMAP-Rule" id="MF_00126"/>
    </source>
</evidence>